<sequence>MTLLFADLCAIFTPYRWMIEHVTTKRGQLRIYLGAAPGVGKTYAMLGEAHRRLERGTDVVAAVVETHGRNKTAKLLEGIEMIPPRYVEYRGARFPELDVEAVLRRHPQVVLVDELAHTNTPGSKNPKRWQDVQEILDAGITVISTVNIQHLEGLNDVVEQITGIEQKEKIPDEIVRAADQVELVDITPEALRRRLAHGNVYAAERVDAALSNYFRTGNLTALREIALLWLADQVDAALEKYRADKKITATWEARERVVVAVTGGPESETLVRRASRIASKSSAELMVVHVIRGDGLAGVSAPQLGRVRELATSLGATMHTVVGDDVPTALLDFAREMNATQLVVGTSRRSRWARLFDEGIGARTVQEPGGIDVHMVTHPAASRASGWSRVSPRERHIASWLAALVVPSVICAITVAWLDRFMGIGGESALFFIGVLIVALLGGVAPAALSALLSGMLLNYFLTEPRYTWTIAEPDAAVTEFVLLAMAVAVAVLVDGAASRTREARRASQEAELLALFAGSVLRGADLATLLQRVRETYSQRAVTMLRVRQGASTGETVACVGTNPCRDVDSADTAIEVGDDEFWMLMAGRKLAARDRRVLTAVATQAAGLVKQRELAEEAGQAEAIARADELRRSLLSAVSHDLRTPLAAAKVAVSSLRTEDVAFSPEDTAELLATIEESIDQLTALVANLLDSSRLAAGVIRPQLRRAYLEEAVQRALVSIGKGATGFYRSGIDRVKVDVGDAVAMADAGLLERVLANLIDNALRYAPDCVVRVNAGRVRERVLINVIDEGPGVPRGTEEQLFAPFQRPGDHDNTTGVGLGMSVARGFVEAMGGTISATDTPGGGLTVVIDLAAPEDRP</sequence>
<dbReference type="EC" id="2.7.13.3" evidence="5"/>
<dbReference type="EMBL" id="AL123456">
    <property type="protein sequence ID" value="CCP43778.1"/>
    <property type="molecule type" value="Genomic_DNA"/>
</dbReference>
<dbReference type="PIR" id="G70623">
    <property type="entry name" value="G70623"/>
</dbReference>
<dbReference type="RefSeq" id="NP_215544.1">
    <property type="nucleotide sequence ID" value="NC_000962.3"/>
</dbReference>
<dbReference type="RefSeq" id="WP_003915886.1">
    <property type="nucleotide sequence ID" value="NZ_NVQJ01000018.1"/>
</dbReference>
<dbReference type="SMR" id="P9WGL3"/>
<dbReference type="FunCoup" id="P9WGL3">
    <property type="interactions" value="57"/>
</dbReference>
<dbReference type="IntAct" id="P9WGL3">
    <property type="interactions" value="1"/>
</dbReference>
<dbReference type="STRING" id="83332.Rv1028c"/>
<dbReference type="iPTMnet" id="P9WGL3"/>
<dbReference type="PaxDb" id="83332-Rv1028c"/>
<dbReference type="GeneID" id="886084"/>
<dbReference type="KEGG" id="mtu:Rv1028c"/>
<dbReference type="KEGG" id="mtv:RVBD_1028c"/>
<dbReference type="TubercuList" id="Rv1028c"/>
<dbReference type="eggNOG" id="COG2205">
    <property type="taxonomic scope" value="Bacteria"/>
</dbReference>
<dbReference type="InParanoid" id="P9WGL3"/>
<dbReference type="OrthoDB" id="9806130at2"/>
<dbReference type="PhylomeDB" id="P9WGL3"/>
<dbReference type="BRENDA" id="2.7.13.3">
    <property type="organism ID" value="3445"/>
</dbReference>
<dbReference type="PHI-base" id="PHI:3618"/>
<dbReference type="Proteomes" id="UP000001584">
    <property type="component" value="Chromosome"/>
</dbReference>
<dbReference type="GO" id="GO:0005737">
    <property type="term" value="C:cytoplasm"/>
    <property type="evidence" value="ECO:0000314"/>
    <property type="project" value="MTBBASE"/>
</dbReference>
<dbReference type="GO" id="GO:0005886">
    <property type="term" value="C:plasma membrane"/>
    <property type="evidence" value="ECO:0007005"/>
    <property type="project" value="MTBBASE"/>
</dbReference>
<dbReference type="GO" id="GO:0005524">
    <property type="term" value="F:ATP binding"/>
    <property type="evidence" value="ECO:0007669"/>
    <property type="project" value="UniProtKB-KW"/>
</dbReference>
<dbReference type="GO" id="GO:0000155">
    <property type="term" value="F:phosphorelay sensor kinase activity"/>
    <property type="evidence" value="ECO:0000318"/>
    <property type="project" value="GO_Central"/>
</dbReference>
<dbReference type="CDD" id="cd00075">
    <property type="entry name" value="HATPase"/>
    <property type="match status" value="1"/>
</dbReference>
<dbReference type="CDD" id="cd00082">
    <property type="entry name" value="HisKA"/>
    <property type="match status" value="1"/>
</dbReference>
<dbReference type="CDD" id="cd01987">
    <property type="entry name" value="USP_KdpD-like"/>
    <property type="match status" value="1"/>
</dbReference>
<dbReference type="FunFam" id="1.10.287.130:FF:000021">
    <property type="entry name" value="Sensor histidine kinase KdpD"/>
    <property type="match status" value="1"/>
</dbReference>
<dbReference type="FunFam" id="1.20.120.620:FF:000006">
    <property type="entry name" value="Sensor histidine kinase KdpD"/>
    <property type="match status" value="1"/>
</dbReference>
<dbReference type="FunFam" id="3.40.50.300:FF:000483">
    <property type="entry name" value="Sensor histidine kinase KdpD"/>
    <property type="match status" value="1"/>
</dbReference>
<dbReference type="FunFam" id="3.40.50.620:FF:000112">
    <property type="entry name" value="Sensor histidine kinase KdpD"/>
    <property type="match status" value="1"/>
</dbReference>
<dbReference type="Gene3D" id="1.10.287.130">
    <property type="match status" value="1"/>
</dbReference>
<dbReference type="Gene3D" id="1.20.120.620">
    <property type="entry name" value="Backbone structure of the membrane domain of e. Coli histidine kinase receptor kdpd"/>
    <property type="match status" value="1"/>
</dbReference>
<dbReference type="Gene3D" id="3.30.565.10">
    <property type="entry name" value="Histidine kinase-like ATPase, C-terminal domain"/>
    <property type="match status" value="1"/>
</dbReference>
<dbReference type="Gene3D" id="3.40.50.620">
    <property type="entry name" value="HUPs"/>
    <property type="match status" value="1"/>
</dbReference>
<dbReference type="Gene3D" id="3.40.50.300">
    <property type="entry name" value="P-loop containing nucleotide triphosphate hydrolases"/>
    <property type="match status" value="1"/>
</dbReference>
<dbReference type="InterPro" id="IPR036890">
    <property type="entry name" value="HATPase_C_sf"/>
</dbReference>
<dbReference type="InterPro" id="IPR005467">
    <property type="entry name" value="His_kinase_dom"/>
</dbReference>
<dbReference type="InterPro" id="IPR003661">
    <property type="entry name" value="HisK_dim/P_dom"/>
</dbReference>
<dbReference type="InterPro" id="IPR036097">
    <property type="entry name" value="HisK_dim/P_sf"/>
</dbReference>
<dbReference type="InterPro" id="IPR052023">
    <property type="entry name" value="Histidine_kinase_KdpD"/>
</dbReference>
<dbReference type="InterPro" id="IPR038318">
    <property type="entry name" value="KdpD_sf"/>
</dbReference>
<dbReference type="InterPro" id="IPR025201">
    <property type="entry name" value="KdpD_TM"/>
</dbReference>
<dbReference type="InterPro" id="IPR027417">
    <property type="entry name" value="P-loop_NTPase"/>
</dbReference>
<dbReference type="InterPro" id="IPR014729">
    <property type="entry name" value="Rossmann-like_a/b/a_fold"/>
</dbReference>
<dbReference type="InterPro" id="IPR004358">
    <property type="entry name" value="Sig_transdc_His_kin-like_C"/>
</dbReference>
<dbReference type="InterPro" id="IPR003852">
    <property type="entry name" value="Sig_transdc_His_kinase_KdpD_N"/>
</dbReference>
<dbReference type="InterPro" id="IPR006016">
    <property type="entry name" value="UspA"/>
</dbReference>
<dbReference type="PANTHER" id="PTHR45569">
    <property type="entry name" value="SENSOR PROTEIN KDPD"/>
    <property type="match status" value="1"/>
</dbReference>
<dbReference type="PANTHER" id="PTHR45569:SF1">
    <property type="entry name" value="SENSOR PROTEIN KDPD"/>
    <property type="match status" value="1"/>
</dbReference>
<dbReference type="Pfam" id="PF13493">
    <property type="entry name" value="DUF4118"/>
    <property type="match status" value="1"/>
</dbReference>
<dbReference type="Pfam" id="PF02518">
    <property type="entry name" value="HATPase_c"/>
    <property type="match status" value="1"/>
</dbReference>
<dbReference type="Pfam" id="PF00512">
    <property type="entry name" value="HisKA"/>
    <property type="match status" value="1"/>
</dbReference>
<dbReference type="Pfam" id="PF02702">
    <property type="entry name" value="KdpD"/>
    <property type="match status" value="1"/>
</dbReference>
<dbReference type="Pfam" id="PF00582">
    <property type="entry name" value="Usp"/>
    <property type="match status" value="1"/>
</dbReference>
<dbReference type="PRINTS" id="PR00344">
    <property type="entry name" value="BCTRLSENSOR"/>
</dbReference>
<dbReference type="SMART" id="SM00387">
    <property type="entry name" value="HATPase_c"/>
    <property type="match status" value="1"/>
</dbReference>
<dbReference type="SMART" id="SM00388">
    <property type="entry name" value="HisKA"/>
    <property type="match status" value="1"/>
</dbReference>
<dbReference type="SUPFAM" id="SSF52402">
    <property type="entry name" value="Adenine nucleotide alpha hydrolases-like"/>
    <property type="match status" value="1"/>
</dbReference>
<dbReference type="SUPFAM" id="SSF55874">
    <property type="entry name" value="ATPase domain of HSP90 chaperone/DNA topoisomerase II/histidine kinase"/>
    <property type="match status" value="1"/>
</dbReference>
<dbReference type="SUPFAM" id="SSF47384">
    <property type="entry name" value="Homodimeric domain of signal transducing histidine kinase"/>
    <property type="match status" value="1"/>
</dbReference>
<dbReference type="SUPFAM" id="SSF52540">
    <property type="entry name" value="P-loop containing nucleoside triphosphate hydrolases"/>
    <property type="match status" value="1"/>
</dbReference>
<dbReference type="PROSITE" id="PS50109">
    <property type="entry name" value="HIS_KIN"/>
    <property type="match status" value="1"/>
</dbReference>
<keyword id="KW-0067">ATP-binding</keyword>
<keyword id="KW-1003">Cell membrane</keyword>
<keyword id="KW-0418">Kinase</keyword>
<keyword id="KW-0472">Membrane</keyword>
<keyword id="KW-0547">Nucleotide-binding</keyword>
<keyword id="KW-0597">Phosphoprotein</keyword>
<keyword id="KW-1185">Reference proteome</keyword>
<keyword id="KW-0808">Transferase</keyword>
<keyword id="KW-0812">Transmembrane</keyword>
<keyword id="KW-1133">Transmembrane helix</keyword>
<keyword id="KW-0902">Two-component regulatory system</keyword>
<protein>
    <recommendedName>
        <fullName>Sensor protein KdpD</fullName>
        <ecNumber evidence="5">2.7.13.3</ecNumber>
    </recommendedName>
</protein>
<organism>
    <name type="scientific">Mycobacterium tuberculosis (strain ATCC 25618 / H37Rv)</name>
    <dbReference type="NCBI Taxonomy" id="83332"/>
    <lineage>
        <taxon>Bacteria</taxon>
        <taxon>Bacillati</taxon>
        <taxon>Actinomycetota</taxon>
        <taxon>Actinomycetes</taxon>
        <taxon>Mycobacteriales</taxon>
        <taxon>Mycobacteriaceae</taxon>
        <taxon>Mycobacterium</taxon>
        <taxon>Mycobacterium tuberculosis complex</taxon>
    </lineage>
</organism>
<comment type="function">
    <text evidence="5">Member of the two-component regulatory system KdpD/KdpE involved in the regulation of the kdp operon. Functions as a sensor protein kinase which is autophosphorylated at a histidine residue and transfers its phosphate group to the conserved aspartic acid residue in the regulatory domain of KdpE in response to environmental signals such as low levels of potassium ion, osmotic imbalance, acid and nutrient stresses. In turn, KdpE binds to the upstream promoter regions of target genes to positively regulate their expression.</text>
</comment>
<comment type="catalytic activity">
    <reaction evidence="5">
        <text>ATP + protein L-histidine = ADP + protein N-phospho-L-histidine.</text>
        <dbReference type="EC" id="2.7.13.3"/>
    </reaction>
</comment>
<comment type="cofactor">
    <cofactor evidence="5">
        <name>Mg(2+)</name>
        <dbReference type="ChEBI" id="CHEBI:18420"/>
    </cofactor>
</comment>
<comment type="subunit">
    <text evidence="7">May interact with lipoproteins LprF and LprJ.</text>
</comment>
<comment type="subcellular location">
    <subcellularLocation>
        <location evidence="7">Cell membrane</location>
        <topology evidence="7">Multi-pass membrane protein</topology>
    </subcellularLocation>
</comment>
<comment type="induction">
    <text evidence="3">Induced at low K(+) concentrations (in M.tuberculosis); overexpression of LprF or LprJ increases expression of this gene at 0 and 250 uM K(+) (in M.smegmatis).</text>
</comment>
<comment type="PTM">
    <text evidence="5">Autophosphorylated.</text>
</comment>
<comment type="disruption phenotype">
    <text evidence="4">Cells lacking KdpD and KdpE show an increase in virulence in mouse model of infection, with significantly shorter survival times.</text>
</comment>
<comment type="similarity">
    <text evidence="6">In the central section; belongs to the universal stress protein A family.</text>
</comment>
<feature type="chain" id="PRO_0000074773" description="Sensor protein KdpD">
    <location>
        <begin position="1"/>
        <end position="860"/>
    </location>
</feature>
<feature type="topological domain" description="Cytoplasmic" evidence="7">
    <location>
        <begin position="1"/>
        <end position="396"/>
    </location>
</feature>
<feature type="transmembrane region" description="Helical" evidence="1">
    <location>
        <begin position="397"/>
        <end position="417"/>
    </location>
</feature>
<feature type="topological domain" description="Extracellular" evidence="6">
    <location>
        <begin position="418"/>
        <end position="428"/>
    </location>
</feature>
<feature type="transmembrane region" description="Helical" evidence="1">
    <location>
        <begin position="429"/>
        <end position="449"/>
    </location>
</feature>
<feature type="topological domain" description="Cytoplasmic" evidence="7">
    <location>
        <begin position="450"/>
        <end position="476"/>
    </location>
</feature>
<feature type="transmembrane region" description="Helical" evidence="1">
    <location>
        <begin position="477"/>
        <end position="497"/>
    </location>
</feature>
<feature type="topological domain" description="Extracellular" evidence="6">
    <location>
        <begin position="498"/>
        <end position="510"/>
    </location>
</feature>
<feature type="transmembrane region" description="Helical" evidence="1">
    <location>
        <begin position="511"/>
        <end position="531"/>
    </location>
</feature>
<feature type="topological domain" description="Cytoplasmic" evidence="7">
    <location>
        <begin position="532"/>
        <end position="860"/>
    </location>
</feature>
<feature type="domain" description="Histidine kinase" evidence="2">
    <location>
        <begin position="639"/>
        <end position="857"/>
    </location>
</feature>
<feature type="modified residue" description="Phosphohistidine; by autocatalysis" evidence="2 5">
    <location>
        <position position="642"/>
    </location>
</feature>
<feature type="mutagenesis site" description="Complete loss of autophosphorylation." evidence="5">
    <original>H</original>
    <variation>Q</variation>
    <location>
        <position position="642"/>
    </location>
</feature>
<name>KDPD_MYCTU</name>
<gene>
    <name type="primary">kdpD</name>
    <name type="ordered locus">Rv1028c</name>
    <name type="ORF">MTCY10G2.21</name>
</gene>
<proteinExistence type="evidence at protein level"/>
<evidence type="ECO:0000255" key="1"/>
<evidence type="ECO:0000255" key="2">
    <source>
        <dbReference type="PROSITE-ProRule" id="PRU00107"/>
    </source>
</evidence>
<evidence type="ECO:0000269" key="3">
    <source>
    </source>
</evidence>
<evidence type="ECO:0000269" key="4">
    <source>
    </source>
</evidence>
<evidence type="ECO:0000269" key="5">
    <source>
    </source>
</evidence>
<evidence type="ECO:0000305" key="6"/>
<evidence type="ECO:0000305" key="7">
    <source>
    </source>
</evidence>
<accession>P9WGL3</accession>
<accession>L0T881</accession>
<accession>P96372</accession>
<reference key="1">
    <citation type="journal article" date="1998" name="Nature">
        <title>Deciphering the biology of Mycobacterium tuberculosis from the complete genome sequence.</title>
        <authorList>
            <person name="Cole S.T."/>
            <person name="Brosch R."/>
            <person name="Parkhill J."/>
            <person name="Garnier T."/>
            <person name="Churcher C.M."/>
            <person name="Harris D.E."/>
            <person name="Gordon S.V."/>
            <person name="Eiglmeier K."/>
            <person name="Gas S."/>
            <person name="Barry C.E. III"/>
            <person name="Tekaia F."/>
            <person name="Badcock K."/>
            <person name="Basham D."/>
            <person name="Brown D."/>
            <person name="Chillingworth T."/>
            <person name="Connor R."/>
            <person name="Davies R.M."/>
            <person name="Devlin K."/>
            <person name="Feltwell T."/>
            <person name="Gentles S."/>
            <person name="Hamlin N."/>
            <person name="Holroyd S."/>
            <person name="Hornsby T."/>
            <person name="Jagels K."/>
            <person name="Krogh A."/>
            <person name="McLean J."/>
            <person name="Moule S."/>
            <person name="Murphy L.D."/>
            <person name="Oliver S."/>
            <person name="Osborne J."/>
            <person name="Quail M.A."/>
            <person name="Rajandream M.A."/>
            <person name="Rogers J."/>
            <person name="Rutter S."/>
            <person name="Seeger K."/>
            <person name="Skelton S."/>
            <person name="Squares S."/>
            <person name="Squares R."/>
            <person name="Sulston J.E."/>
            <person name="Taylor K."/>
            <person name="Whitehead S."/>
            <person name="Barrell B.G."/>
        </authorList>
    </citation>
    <scope>NUCLEOTIDE SEQUENCE [LARGE SCALE GENOMIC DNA]</scope>
    <source>
        <strain>ATCC 25618 / H37Rv</strain>
    </source>
</reference>
<reference key="2">
    <citation type="journal article" date="2003" name="Infect. Immun.">
        <title>Deletion of two-component regulatory systems increases the virulence of Mycobacterium tuberculosis.</title>
        <authorList>
            <person name="Parish T."/>
            <person name="Smith D.A."/>
            <person name="Kendall S."/>
            <person name="Casali N."/>
            <person name="Bancroft G.J."/>
            <person name="Stoker N.G."/>
        </authorList>
    </citation>
    <scope>DISRUPTION PHENOTYPE</scope>
    <source>
        <strain>ATCC 25618 / H37Rv</strain>
    </source>
</reference>
<reference key="3">
    <citation type="journal article" date="2003" name="Mol. Microbiol.">
        <title>Interaction of the sensor module of Mycobacterium tuberculosis H37Rv KdpD with members of the Lpr family.</title>
        <authorList>
            <person name="Steyn A.J."/>
            <person name="Joseph J."/>
            <person name="Bloom B.R."/>
        </authorList>
    </citation>
    <scope>POSSIBLE INTERACTION WITH LPRF AND LPRJ</scope>
    <scope>INDUCTION</scope>
    <scope>TOPOLOGY</scope>
    <scope>EXPRESSION IN M.SMEGMATIS</scope>
    <source>
        <strain>ATCC 25618 / H37Rv</strain>
    </source>
</reference>
<reference key="4">
    <citation type="journal article" date="2011" name="Mol. Cell. Proteomics">
        <title>Proteogenomic analysis of Mycobacterium tuberculosis by high resolution mass spectrometry.</title>
        <authorList>
            <person name="Kelkar D.S."/>
            <person name="Kumar D."/>
            <person name="Kumar P."/>
            <person name="Balakrishnan L."/>
            <person name="Muthusamy B."/>
            <person name="Yadav A.K."/>
            <person name="Shrivastava P."/>
            <person name="Marimuthu A."/>
            <person name="Anand S."/>
            <person name="Sundaram H."/>
            <person name="Kingsbury R."/>
            <person name="Harsha H.C."/>
            <person name="Nair B."/>
            <person name="Prasad T.S."/>
            <person name="Chauhan D.S."/>
            <person name="Katoch K."/>
            <person name="Katoch V.M."/>
            <person name="Kumar P."/>
            <person name="Chaerkady R."/>
            <person name="Ramachandran S."/>
            <person name="Dash D."/>
            <person name="Pandey A."/>
        </authorList>
    </citation>
    <scope>IDENTIFICATION BY MASS SPECTROMETRY [LARGE SCALE ANALYSIS]</scope>
    <source>
        <strain>ATCC 25618 / H37Rv</strain>
    </source>
</reference>
<reference key="5">
    <citation type="journal article" date="2014" name="Biochem. Biophys. Res. Commun.">
        <title>Rv1027c-Rv1028c encode functional KdpDE two--component system in Mycobacterium tuberculosis.</title>
        <authorList>
            <person name="Agrawal R."/>
            <person name="Saini D.K."/>
        </authorList>
    </citation>
    <scope>FUNCTION</scope>
    <scope>CATALYTIC ACTIVITY</scope>
    <scope>AUTOPHOSPHORYLATION</scope>
    <scope>PHOSPHORYLATION AT HIS-642</scope>
    <scope>MUTAGENESIS OF HIS-642</scope>
    <scope>COFACTOR</scope>
</reference>